<name>PNP_ECOLC</name>
<gene>
    <name evidence="1" type="primary">pnp</name>
    <name type="ordered locus">EcolC_0534</name>
</gene>
<proteinExistence type="inferred from homology"/>
<feature type="chain" id="PRO_1000087988" description="Polyribonucleotide nucleotidyltransferase">
    <location>
        <begin position="1"/>
        <end position="711"/>
    </location>
</feature>
<feature type="domain" description="KH" evidence="1">
    <location>
        <begin position="553"/>
        <end position="612"/>
    </location>
</feature>
<feature type="domain" description="S1 motif" evidence="1">
    <location>
        <begin position="622"/>
        <end position="690"/>
    </location>
</feature>
<feature type="region of interest" description="Disordered" evidence="2">
    <location>
        <begin position="689"/>
        <end position="711"/>
    </location>
</feature>
<feature type="compositionally biased region" description="Low complexity" evidence="2">
    <location>
        <begin position="694"/>
        <end position="711"/>
    </location>
</feature>
<feature type="binding site" evidence="1">
    <location>
        <position position="486"/>
    </location>
    <ligand>
        <name>Mg(2+)</name>
        <dbReference type="ChEBI" id="CHEBI:18420"/>
    </ligand>
</feature>
<feature type="binding site" evidence="1">
    <location>
        <position position="492"/>
    </location>
    <ligand>
        <name>Mg(2+)</name>
        <dbReference type="ChEBI" id="CHEBI:18420"/>
    </ligand>
</feature>
<reference key="1">
    <citation type="submission" date="2008-02" db="EMBL/GenBank/DDBJ databases">
        <title>Complete sequence of Escherichia coli C str. ATCC 8739.</title>
        <authorList>
            <person name="Copeland A."/>
            <person name="Lucas S."/>
            <person name="Lapidus A."/>
            <person name="Glavina del Rio T."/>
            <person name="Dalin E."/>
            <person name="Tice H."/>
            <person name="Bruce D."/>
            <person name="Goodwin L."/>
            <person name="Pitluck S."/>
            <person name="Kiss H."/>
            <person name="Brettin T."/>
            <person name="Detter J.C."/>
            <person name="Han C."/>
            <person name="Kuske C.R."/>
            <person name="Schmutz J."/>
            <person name="Larimer F."/>
            <person name="Land M."/>
            <person name="Hauser L."/>
            <person name="Kyrpides N."/>
            <person name="Mikhailova N."/>
            <person name="Ingram L."/>
            <person name="Richardson P."/>
        </authorList>
    </citation>
    <scope>NUCLEOTIDE SEQUENCE [LARGE SCALE GENOMIC DNA]</scope>
    <source>
        <strain>ATCC 8739 / DSM 1576 / NBRC 3972 / NCIMB 8545 / WDCM 00012 / Crooks</strain>
    </source>
</reference>
<comment type="function">
    <text evidence="1">Involved in mRNA degradation. Catalyzes the phosphorolysis of single-stranded polyribonucleotides processively in the 3'- to 5'-direction.</text>
</comment>
<comment type="catalytic activity">
    <reaction evidence="1">
        <text>RNA(n+1) + phosphate = RNA(n) + a ribonucleoside 5'-diphosphate</text>
        <dbReference type="Rhea" id="RHEA:22096"/>
        <dbReference type="Rhea" id="RHEA-COMP:14527"/>
        <dbReference type="Rhea" id="RHEA-COMP:17342"/>
        <dbReference type="ChEBI" id="CHEBI:43474"/>
        <dbReference type="ChEBI" id="CHEBI:57930"/>
        <dbReference type="ChEBI" id="CHEBI:140395"/>
        <dbReference type="EC" id="2.7.7.8"/>
    </reaction>
</comment>
<comment type="cofactor">
    <cofactor evidence="1">
        <name>Mg(2+)</name>
        <dbReference type="ChEBI" id="CHEBI:18420"/>
    </cofactor>
</comment>
<comment type="subunit">
    <text evidence="1">Component of the RNA degradosome, which is a multiprotein complex involved in RNA processing and mRNA degradation.</text>
</comment>
<comment type="subcellular location">
    <subcellularLocation>
        <location evidence="1">Cytoplasm</location>
    </subcellularLocation>
</comment>
<comment type="similarity">
    <text evidence="1">Belongs to the polyribonucleotide nucleotidyltransferase family.</text>
</comment>
<accession>B1IQV7</accession>
<dbReference type="EC" id="2.7.7.8" evidence="1"/>
<dbReference type="EMBL" id="CP000946">
    <property type="protein sequence ID" value="ACA76211.1"/>
    <property type="molecule type" value="Genomic_DNA"/>
</dbReference>
<dbReference type="RefSeq" id="WP_012304832.1">
    <property type="nucleotide sequence ID" value="NZ_MTFT01000027.1"/>
</dbReference>
<dbReference type="SMR" id="B1IQV7"/>
<dbReference type="KEGG" id="ecl:EcolC_0534"/>
<dbReference type="HOGENOM" id="CLU_004217_2_2_6"/>
<dbReference type="GO" id="GO:0005829">
    <property type="term" value="C:cytosol"/>
    <property type="evidence" value="ECO:0007669"/>
    <property type="project" value="TreeGrafter"/>
</dbReference>
<dbReference type="GO" id="GO:0000175">
    <property type="term" value="F:3'-5'-RNA exonuclease activity"/>
    <property type="evidence" value="ECO:0007669"/>
    <property type="project" value="TreeGrafter"/>
</dbReference>
<dbReference type="GO" id="GO:0000287">
    <property type="term" value="F:magnesium ion binding"/>
    <property type="evidence" value="ECO:0007669"/>
    <property type="project" value="UniProtKB-UniRule"/>
</dbReference>
<dbReference type="GO" id="GO:0004654">
    <property type="term" value="F:polyribonucleotide nucleotidyltransferase activity"/>
    <property type="evidence" value="ECO:0007669"/>
    <property type="project" value="UniProtKB-UniRule"/>
</dbReference>
<dbReference type="GO" id="GO:0003723">
    <property type="term" value="F:RNA binding"/>
    <property type="evidence" value="ECO:0007669"/>
    <property type="project" value="UniProtKB-UniRule"/>
</dbReference>
<dbReference type="GO" id="GO:0006402">
    <property type="term" value="P:mRNA catabolic process"/>
    <property type="evidence" value="ECO:0007669"/>
    <property type="project" value="UniProtKB-UniRule"/>
</dbReference>
<dbReference type="GO" id="GO:0006396">
    <property type="term" value="P:RNA processing"/>
    <property type="evidence" value="ECO:0007669"/>
    <property type="project" value="InterPro"/>
</dbReference>
<dbReference type="CDD" id="cd02393">
    <property type="entry name" value="KH-I_PNPase"/>
    <property type="match status" value="1"/>
</dbReference>
<dbReference type="CDD" id="cd11363">
    <property type="entry name" value="RNase_PH_PNPase_1"/>
    <property type="match status" value="1"/>
</dbReference>
<dbReference type="CDD" id="cd11364">
    <property type="entry name" value="RNase_PH_PNPase_2"/>
    <property type="match status" value="1"/>
</dbReference>
<dbReference type="CDD" id="cd04472">
    <property type="entry name" value="S1_PNPase"/>
    <property type="match status" value="1"/>
</dbReference>
<dbReference type="FunFam" id="2.40.50.140:FF:000023">
    <property type="entry name" value="Polyribonucleotide nucleotidyltransferase"/>
    <property type="match status" value="1"/>
</dbReference>
<dbReference type="FunFam" id="3.30.1370.10:FF:000001">
    <property type="entry name" value="Polyribonucleotide nucleotidyltransferase"/>
    <property type="match status" value="1"/>
</dbReference>
<dbReference type="FunFam" id="3.30.230.70:FF:000001">
    <property type="entry name" value="Polyribonucleotide nucleotidyltransferase"/>
    <property type="match status" value="1"/>
</dbReference>
<dbReference type="FunFam" id="3.30.230.70:FF:000002">
    <property type="entry name" value="Polyribonucleotide nucleotidyltransferase"/>
    <property type="match status" value="1"/>
</dbReference>
<dbReference type="Gene3D" id="3.30.230.70">
    <property type="entry name" value="GHMP Kinase, N-terminal domain"/>
    <property type="match status" value="2"/>
</dbReference>
<dbReference type="Gene3D" id="3.30.1370.10">
    <property type="entry name" value="K Homology domain, type 1"/>
    <property type="match status" value="1"/>
</dbReference>
<dbReference type="Gene3D" id="2.40.50.140">
    <property type="entry name" value="Nucleic acid-binding proteins"/>
    <property type="match status" value="1"/>
</dbReference>
<dbReference type="HAMAP" id="MF_01595">
    <property type="entry name" value="PNPase"/>
    <property type="match status" value="1"/>
</dbReference>
<dbReference type="InterPro" id="IPR001247">
    <property type="entry name" value="ExoRNase_PH_dom1"/>
</dbReference>
<dbReference type="InterPro" id="IPR015847">
    <property type="entry name" value="ExoRNase_PH_dom2"/>
</dbReference>
<dbReference type="InterPro" id="IPR036345">
    <property type="entry name" value="ExoRNase_PH_dom2_sf"/>
</dbReference>
<dbReference type="InterPro" id="IPR004087">
    <property type="entry name" value="KH_dom"/>
</dbReference>
<dbReference type="InterPro" id="IPR004088">
    <property type="entry name" value="KH_dom_type_1"/>
</dbReference>
<dbReference type="InterPro" id="IPR036612">
    <property type="entry name" value="KH_dom_type_1_sf"/>
</dbReference>
<dbReference type="InterPro" id="IPR012340">
    <property type="entry name" value="NA-bd_OB-fold"/>
</dbReference>
<dbReference type="InterPro" id="IPR012162">
    <property type="entry name" value="PNPase"/>
</dbReference>
<dbReference type="InterPro" id="IPR027408">
    <property type="entry name" value="PNPase/RNase_PH_dom_sf"/>
</dbReference>
<dbReference type="InterPro" id="IPR015848">
    <property type="entry name" value="PNPase_PH_RNA-bd_bac/org-type"/>
</dbReference>
<dbReference type="InterPro" id="IPR036456">
    <property type="entry name" value="PNPase_PH_RNA-bd_sf"/>
</dbReference>
<dbReference type="InterPro" id="IPR020568">
    <property type="entry name" value="Ribosomal_Su5_D2-typ_SF"/>
</dbReference>
<dbReference type="InterPro" id="IPR003029">
    <property type="entry name" value="S1_domain"/>
</dbReference>
<dbReference type="NCBIfam" id="TIGR03591">
    <property type="entry name" value="polynuc_phos"/>
    <property type="match status" value="1"/>
</dbReference>
<dbReference type="NCBIfam" id="NF008805">
    <property type="entry name" value="PRK11824.1"/>
    <property type="match status" value="1"/>
</dbReference>
<dbReference type="PANTHER" id="PTHR11252">
    <property type="entry name" value="POLYRIBONUCLEOTIDE NUCLEOTIDYLTRANSFERASE"/>
    <property type="match status" value="1"/>
</dbReference>
<dbReference type="PANTHER" id="PTHR11252:SF0">
    <property type="entry name" value="POLYRIBONUCLEOTIDE NUCLEOTIDYLTRANSFERASE 1, MITOCHONDRIAL"/>
    <property type="match status" value="1"/>
</dbReference>
<dbReference type="Pfam" id="PF00013">
    <property type="entry name" value="KH_1"/>
    <property type="match status" value="1"/>
</dbReference>
<dbReference type="Pfam" id="PF03726">
    <property type="entry name" value="PNPase"/>
    <property type="match status" value="1"/>
</dbReference>
<dbReference type="Pfam" id="PF01138">
    <property type="entry name" value="RNase_PH"/>
    <property type="match status" value="2"/>
</dbReference>
<dbReference type="Pfam" id="PF03725">
    <property type="entry name" value="RNase_PH_C"/>
    <property type="match status" value="2"/>
</dbReference>
<dbReference type="Pfam" id="PF00575">
    <property type="entry name" value="S1"/>
    <property type="match status" value="1"/>
</dbReference>
<dbReference type="PIRSF" id="PIRSF005499">
    <property type="entry name" value="PNPase"/>
    <property type="match status" value="1"/>
</dbReference>
<dbReference type="SMART" id="SM00322">
    <property type="entry name" value="KH"/>
    <property type="match status" value="1"/>
</dbReference>
<dbReference type="SMART" id="SM00316">
    <property type="entry name" value="S1"/>
    <property type="match status" value="1"/>
</dbReference>
<dbReference type="SUPFAM" id="SSF54791">
    <property type="entry name" value="Eukaryotic type KH-domain (KH-domain type I)"/>
    <property type="match status" value="1"/>
</dbReference>
<dbReference type="SUPFAM" id="SSF50249">
    <property type="entry name" value="Nucleic acid-binding proteins"/>
    <property type="match status" value="1"/>
</dbReference>
<dbReference type="SUPFAM" id="SSF46915">
    <property type="entry name" value="Polynucleotide phosphorylase/guanosine pentaphosphate synthase (PNPase/GPSI), domain 3"/>
    <property type="match status" value="1"/>
</dbReference>
<dbReference type="SUPFAM" id="SSF55666">
    <property type="entry name" value="Ribonuclease PH domain 2-like"/>
    <property type="match status" value="2"/>
</dbReference>
<dbReference type="SUPFAM" id="SSF54211">
    <property type="entry name" value="Ribosomal protein S5 domain 2-like"/>
    <property type="match status" value="2"/>
</dbReference>
<dbReference type="PROSITE" id="PS50084">
    <property type="entry name" value="KH_TYPE_1"/>
    <property type="match status" value="1"/>
</dbReference>
<dbReference type="PROSITE" id="PS50126">
    <property type="entry name" value="S1"/>
    <property type="match status" value="1"/>
</dbReference>
<evidence type="ECO:0000255" key="1">
    <source>
        <dbReference type="HAMAP-Rule" id="MF_01595"/>
    </source>
</evidence>
<evidence type="ECO:0000256" key="2">
    <source>
        <dbReference type="SAM" id="MobiDB-lite"/>
    </source>
</evidence>
<sequence>MLNPIVRKFQYGQHTVTLETGIMARQATAAVMVSMDDTAVFVTVVGQKKAKPGQDFFPLTVNYQERTYAAGRIPGSFFRREGRPSEGETLIARLIDRPIRPLFPEGFVNEVQVIATVVSVNPQVNPDIVAMIGASAALSLSGIPFNGPIGAARVGYINDQYVLNPTQDELKESKLDLVVAGTEAAVLMVESEAELLSEDQMLGAVVFGHEQQQVVIQNINELVKEAGKPRWDWQPEPVNEALNARVAALAEARLSDAYRITDKQERYAQVDVIKSETIATLLAEDETLDENELGEILHAIEKNVVRSRVLAGEPRIDGREKDMIRGLDVRTGVLPRTHGSALFTRGETQALVTATLGTARDAQVLDELMGERTDTFLFHYNFPPYSVGETGMVGSPKRREIGHGRLAKRGVLAVMPDMDKFPYTVRVVSEITESNGSSSMASVCGASLALMDAGVPIKAAVAGIAMGLVKEGDNYVVLSDILGDEDHLGDMDFKVAGSRDGISALQMDIKIEGITKEIMQVALNQAKGARLHILGVMEQAINAPRGDISEFAPRIHTIKINPDKIKDVIGKGGSVIRALTEETGTTIEIEDDGTVKIAATDGEKAKHAIRRIEEITAEIEVGRVYTGKVTRIVDFGAFVAIGGGKEGLVHISQIADKRVEKVTDYLQMGQEVPVKVLEVDRQGRIRLSIKEATEQSQPAAAPEAPAAEQGE</sequence>
<keyword id="KW-0963">Cytoplasm</keyword>
<keyword id="KW-0460">Magnesium</keyword>
<keyword id="KW-0479">Metal-binding</keyword>
<keyword id="KW-0548">Nucleotidyltransferase</keyword>
<keyword id="KW-0694">RNA-binding</keyword>
<keyword id="KW-0808">Transferase</keyword>
<organism>
    <name type="scientific">Escherichia coli (strain ATCC 8739 / DSM 1576 / NBRC 3972 / NCIMB 8545 / WDCM 00012 / Crooks)</name>
    <dbReference type="NCBI Taxonomy" id="481805"/>
    <lineage>
        <taxon>Bacteria</taxon>
        <taxon>Pseudomonadati</taxon>
        <taxon>Pseudomonadota</taxon>
        <taxon>Gammaproteobacteria</taxon>
        <taxon>Enterobacterales</taxon>
        <taxon>Enterobacteriaceae</taxon>
        <taxon>Escherichia</taxon>
    </lineage>
</organism>
<protein>
    <recommendedName>
        <fullName evidence="1">Polyribonucleotide nucleotidyltransferase</fullName>
        <ecNumber evidence="1">2.7.7.8</ecNumber>
    </recommendedName>
    <alternativeName>
        <fullName evidence="1">Polynucleotide phosphorylase</fullName>
        <shortName evidence="1">PNPase</shortName>
    </alternativeName>
</protein>